<name>TRHO_RICM5</name>
<accession>A8F0N3</accession>
<gene>
    <name evidence="1" type="primary">trhO</name>
    <name type="ordered locus">RMA_0175</name>
</gene>
<evidence type="ECO:0000255" key="1">
    <source>
        <dbReference type="HAMAP-Rule" id="MF_00469"/>
    </source>
</evidence>
<protein>
    <recommendedName>
        <fullName evidence="1">tRNA uridine(34) hydroxylase</fullName>
        <ecNumber evidence="1">1.14.-.-</ecNumber>
    </recommendedName>
    <alternativeName>
        <fullName evidence="1">tRNA hydroxylation protein O</fullName>
    </alternativeName>
</protein>
<dbReference type="EC" id="1.14.-.-" evidence="1"/>
<dbReference type="EMBL" id="CP000683">
    <property type="protein sequence ID" value="ABV84469.1"/>
    <property type="molecule type" value="Genomic_DNA"/>
</dbReference>
<dbReference type="RefSeq" id="WP_012152447.1">
    <property type="nucleotide sequence ID" value="NC_009900.1"/>
</dbReference>
<dbReference type="SMR" id="A8F0N3"/>
<dbReference type="KEGG" id="rms:RMA_0175"/>
<dbReference type="HOGENOM" id="CLU_038878_0_1_5"/>
<dbReference type="Proteomes" id="UP000001311">
    <property type="component" value="Chromosome"/>
</dbReference>
<dbReference type="GO" id="GO:0016705">
    <property type="term" value="F:oxidoreductase activity, acting on paired donors, with incorporation or reduction of molecular oxygen"/>
    <property type="evidence" value="ECO:0007669"/>
    <property type="project" value="UniProtKB-UniRule"/>
</dbReference>
<dbReference type="GO" id="GO:0006400">
    <property type="term" value="P:tRNA modification"/>
    <property type="evidence" value="ECO:0007669"/>
    <property type="project" value="UniProtKB-UniRule"/>
</dbReference>
<dbReference type="CDD" id="cd01518">
    <property type="entry name" value="RHOD_YceA"/>
    <property type="match status" value="1"/>
</dbReference>
<dbReference type="Gene3D" id="3.30.70.100">
    <property type="match status" value="1"/>
</dbReference>
<dbReference type="Gene3D" id="3.40.250.10">
    <property type="entry name" value="Rhodanese-like domain"/>
    <property type="match status" value="1"/>
</dbReference>
<dbReference type="HAMAP" id="MF_00469">
    <property type="entry name" value="TrhO"/>
    <property type="match status" value="1"/>
</dbReference>
<dbReference type="InterPro" id="IPR001763">
    <property type="entry name" value="Rhodanese-like_dom"/>
</dbReference>
<dbReference type="InterPro" id="IPR036873">
    <property type="entry name" value="Rhodanese-like_dom_sf"/>
</dbReference>
<dbReference type="InterPro" id="IPR020936">
    <property type="entry name" value="TrhO"/>
</dbReference>
<dbReference type="InterPro" id="IPR040503">
    <property type="entry name" value="TRHO_N"/>
</dbReference>
<dbReference type="NCBIfam" id="NF002397">
    <property type="entry name" value="PRK01415.1"/>
    <property type="match status" value="1"/>
</dbReference>
<dbReference type="PANTHER" id="PTHR43268:SF3">
    <property type="entry name" value="RHODANESE-LIKE DOMAIN-CONTAINING PROTEIN 7-RELATED"/>
    <property type="match status" value="1"/>
</dbReference>
<dbReference type="PANTHER" id="PTHR43268">
    <property type="entry name" value="THIOSULFATE SULFURTRANSFERASE/RHODANESE-LIKE DOMAIN-CONTAINING PROTEIN 2"/>
    <property type="match status" value="1"/>
</dbReference>
<dbReference type="Pfam" id="PF00581">
    <property type="entry name" value="Rhodanese"/>
    <property type="match status" value="1"/>
</dbReference>
<dbReference type="Pfam" id="PF17773">
    <property type="entry name" value="UPF0176_N"/>
    <property type="match status" value="1"/>
</dbReference>
<dbReference type="SMART" id="SM00450">
    <property type="entry name" value="RHOD"/>
    <property type="match status" value="1"/>
</dbReference>
<dbReference type="SUPFAM" id="SSF52821">
    <property type="entry name" value="Rhodanese/Cell cycle control phosphatase"/>
    <property type="match status" value="1"/>
</dbReference>
<dbReference type="PROSITE" id="PS50206">
    <property type="entry name" value="RHODANESE_3"/>
    <property type="match status" value="1"/>
</dbReference>
<organism>
    <name type="scientific">Rickettsia massiliae (strain Mtu5)</name>
    <dbReference type="NCBI Taxonomy" id="416276"/>
    <lineage>
        <taxon>Bacteria</taxon>
        <taxon>Pseudomonadati</taxon>
        <taxon>Pseudomonadota</taxon>
        <taxon>Alphaproteobacteria</taxon>
        <taxon>Rickettsiales</taxon>
        <taxon>Rickettsiaceae</taxon>
        <taxon>Rickettsieae</taxon>
        <taxon>Rickettsia</taxon>
        <taxon>spotted fever group</taxon>
    </lineage>
</organism>
<comment type="function">
    <text evidence="1">Catalyzes oxygen-dependent 5-hydroxyuridine (ho5U) modification at position 34 in tRNAs.</text>
</comment>
<comment type="catalytic activity">
    <reaction evidence="1">
        <text>uridine(34) in tRNA + AH2 + O2 = 5-hydroxyuridine(34) in tRNA + A + H2O</text>
        <dbReference type="Rhea" id="RHEA:64224"/>
        <dbReference type="Rhea" id="RHEA-COMP:11727"/>
        <dbReference type="Rhea" id="RHEA-COMP:13381"/>
        <dbReference type="ChEBI" id="CHEBI:13193"/>
        <dbReference type="ChEBI" id="CHEBI:15377"/>
        <dbReference type="ChEBI" id="CHEBI:15379"/>
        <dbReference type="ChEBI" id="CHEBI:17499"/>
        <dbReference type="ChEBI" id="CHEBI:65315"/>
        <dbReference type="ChEBI" id="CHEBI:136877"/>
    </reaction>
</comment>
<comment type="similarity">
    <text evidence="1">Belongs to the TrhO family.</text>
</comment>
<feature type="chain" id="PRO_1000060373" description="tRNA uridine(34) hydroxylase">
    <location>
        <begin position="1"/>
        <end position="247"/>
    </location>
</feature>
<feature type="domain" description="Rhodanese" evidence="1">
    <location>
        <begin position="124"/>
        <end position="218"/>
    </location>
</feature>
<feature type="active site" description="Cysteine persulfide intermediate" evidence="1">
    <location>
        <position position="178"/>
    </location>
</feature>
<sequence length="247" mass="28367">MNEKIAILSAYSFVNIEEPANLIPKLLLIGKRKYVRGTILLANEGFNGSFSGSYENVNLVLEELIKLTGPKDVNVKINYSDVHPFQKLKVRLKKEIVAMNVDDLNVDLFKGEYIEPKDWDEFITKQDVIVIDTRNDYEVEVGTFKSAINPNTKTFKQFPAWVQQNQELLKGKKIAMVCTGGIRCEKSTSLLKSIGYDEVYHLKGGILQYLEDTQNKNNLWQGECFVFDDRRAVTDDLSPVERHWLQR</sequence>
<keyword id="KW-0560">Oxidoreductase</keyword>
<keyword id="KW-0819">tRNA processing</keyword>
<reference key="1">
    <citation type="journal article" date="2007" name="Genome Res.">
        <title>Lateral gene transfer between obligate intracellular bacteria: evidence from the Rickettsia massiliae genome.</title>
        <authorList>
            <person name="Blanc G."/>
            <person name="Ogata H."/>
            <person name="Robert C."/>
            <person name="Audic S."/>
            <person name="Claverie J.-M."/>
            <person name="Raoult D."/>
        </authorList>
    </citation>
    <scope>NUCLEOTIDE SEQUENCE [LARGE SCALE GENOMIC DNA]</scope>
    <source>
        <strain>Mtu5</strain>
    </source>
</reference>
<proteinExistence type="inferred from homology"/>